<protein>
    <recommendedName>
        <fullName evidence="12">Acetyltransferase BOT5</fullName>
        <ecNumber evidence="14">2.3.1.-</ecNumber>
    </recommendedName>
    <alternativeName>
        <fullName evidence="12">Botrydial biosynthesis cluster protein 5</fullName>
    </alternativeName>
</protein>
<proteinExistence type="evidence at protein level"/>
<feature type="signal peptide" evidence="2">
    <location>
        <begin position="1"/>
        <end position="19"/>
    </location>
</feature>
<feature type="chain" id="PRO_5002781800" description="Acetyltransferase BOT5">
    <location>
        <begin position="20"/>
        <end position="545"/>
    </location>
</feature>
<feature type="region of interest" description="Disordered" evidence="4">
    <location>
        <begin position="466"/>
        <end position="493"/>
    </location>
</feature>
<feature type="active site" description="Proton acceptor" evidence="1">
    <location>
        <position position="208"/>
    </location>
</feature>
<feature type="glycosylation site" description="N-linked (GlcNAc...) asparagine" evidence="3">
    <location>
        <position position="70"/>
    </location>
</feature>
<feature type="glycosylation site" description="N-linked (GlcNAc...) asparagine" evidence="3">
    <location>
        <position position="198"/>
    </location>
</feature>
<feature type="glycosylation site" description="N-linked (GlcNAc...) asparagine" evidence="3">
    <location>
        <position position="346"/>
    </location>
</feature>
<feature type="glycosylation site" description="N-linked (GlcNAc...) asparagine" evidence="3">
    <location>
        <position position="445"/>
    </location>
</feature>
<reference key="1">
    <citation type="journal article" date="2003" name="Mol. Microbiol.">
        <title>Cyclophilin A and calcineurin functions investigated by gene inactivation, cyclosporin A inhibition and cDNA arrays approaches in the phytopathogenic fungus Botrytis cinerea.</title>
        <authorList>
            <person name="Viaud M."/>
            <person name="Brunet-Simon A."/>
            <person name="Brygoo Y."/>
            <person name="Pradier J.-M."/>
            <person name="Levis C."/>
        </authorList>
    </citation>
    <scope>NUCLEOTIDE SEQUENCE [GENOMIC DNA]</scope>
    <source>
        <strain>T4</strain>
    </source>
</reference>
<reference key="2">
    <citation type="journal article" date="2005" name="Mol. Plant Microbe Interact.">
        <title>Functional analysis of the cytochrome P450 monooxygenase gene bcbot1 of Botrytis cinerea indicates that botrydial is a strain-specific virulence factor.</title>
        <authorList>
            <person name="Siewers V."/>
            <person name="Viaud M."/>
            <person name="Jimenez-Teja D."/>
            <person name="Collado I.G."/>
            <person name="Gronover C.S."/>
            <person name="Pradier J.M."/>
            <person name="Tudzynski B."/>
            <person name="Tudzynski P."/>
        </authorList>
    </citation>
    <scope>FUNCTION</scope>
</reference>
<reference key="3">
    <citation type="journal article" date="2008" name="ACS Chem. Biol.">
        <title>Sesquiterpene synthase from the botrydial biosynthetic gene cluster of the phytopathogen Botrytis cinerea.</title>
        <authorList>
            <person name="Pinedo C."/>
            <person name="Wang C.M."/>
            <person name="Pradier J.M."/>
            <person name="Dalmais B."/>
            <person name="Choquer M."/>
            <person name="Le Pecheur P."/>
            <person name="Morgant G."/>
            <person name="Collado I.G."/>
            <person name="Cane D.E."/>
            <person name="Viaud M."/>
        </authorList>
    </citation>
    <scope>FUNCTION</scope>
    <scope>INDUCTION</scope>
</reference>
<reference key="4">
    <citation type="journal article" date="2009" name="J. Am. Chem. Soc.">
        <title>Biosynthesis of the sesquiterpene botrydial in Botrytis cinerea. Mechanism and stereochemistry of the enzymatic formation of presilphiperfolan-8beta-ol.</title>
        <authorList>
            <person name="Wang C.M."/>
            <person name="Hopsn R."/>
            <person name="Lin X."/>
            <person name="Cane D.E."/>
        </authorList>
    </citation>
    <scope>FUNCTION</scope>
    <scope>CATALYTIC ACTIVITY</scope>
</reference>
<reference key="5">
    <citation type="journal article" date="2016" name="ACS Chem. Biol.">
        <title>Genetic and molecular basis of botrydial biosynthesis: connecting cytochrome P450-encoding genes to biosynthetic intermediates.</title>
        <authorList>
            <person name="Moraga J."/>
            <person name="Dalmais B."/>
            <person name="Izquierdo-Bueno I."/>
            <person name="Aleu J."/>
            <person name="Hanson J.R."/>
            <person name="Hernandez-Galan R."/>
            <person name="Viaud M."/>
            <person name="Collado I.G."/>
        </authorList>
    </citation>
    <scope>FUNCTION</scope>
</reference>
<reference key="6">
    <citation type="journal article" date="2016" name="Fungal Genet. Biol.">
        <title>The botrydial biosynthetic gene cluster of Botrytis cinerea displays a bipartite genomic structure and is positively regulated by the putative Zn(II)2Cys6 transcription factor BcBot6.</title>
        <authorList>
            <person name="Porquier A."/>
            <person name="Morgant G."/>
            <person name="Moraga J."/>
            <person name="Dalmais B."/>
            <person name="Luyten I."/>
            <person name="Simon A."/>
            <person name="Pradier J.M."/>
            <person name="Amselem J."/>
            <person name="Collado I.G."/>
            <person name="Viaud M."/>
        </authorList>
    </citation>
    <scope>FUNCTION</scope>
    <scope>INDUCTION</scope>
</reference>
<reference key="7">
    <citation type="journal article" date="2017" name="Org. Biomol. Chem.">
        <title>The formation of sesquiterpenoid presilphiperfolane and cameroonane metabolites in the Bcbot4 null mutant of Botrytis cinerea.</title>
        <authorList>
            <person name="Franco Dos Santos G."/>
            <person name="Moraga J."/>
            <person name="Takahashi J.A."/>
            <person name="Viaud M."/>
            <person name="Hanson J.R."/>
            <person name="Hernandez Galan R."/>
            <person name="Collado I.G."/>
        </authorList>
    </citation>
    <scope>FUNCTION</scope>
</reference>
<gene>
    <name evidence="12" type="primary">BOT5</name>
    <name type="synonym">BCL5</name>
</gene>
<name>BOT5_BOTFU</name>
<sequence length="545" mass="60949">MATIPLFFSLILFLRLYHASRLEKRKEVEGEGIVAAEDLVSENDNPQGDDEVLPVHFIDQAAIVRTSIINYTFRYNEVLDAAKLHRGLLQLLKIPGWNKLGGRLRATKNGKLEIHVPRSFSKTRPEVKFSHVDCSDTEIESHGLASQLPRPTGSTPSIQEGCHAFRSFALPTDLPNNIEHYWKNDQPMLSLHITSFANGTLVGLTFPHSLTDAMGTSEFLKAWSNVVAGKSSFVKPLQGTQVDVLGDVGTNLDKKASQGEFFLEDQQTRGFSLLSFIARYMWDVKTRRSIRTKHIYLPAKYMSHLRQGVEEELKRQNGGVVPFVSDGDLITAWGARMVMSSSTWKNCSAVICNVFDLRGRLKGTFARGGTYLQNLILPATTVLSKEEAATATTAQIALGLRKAIVEQTDDVQSRRLMRIARRWFSSMGSMPLFAKWDSRVVACTNWTKAKFLDAADFGPNALIAGGAGNQKSSSTRKAARHTEPTQAQTQPGRPVMYWGTTLSVTDNPRDTFVIYGKDKVGNYWVHAYLREETWSLIQKELDSFR</sequence>
<dbReference type="EC" id="2.3.1.-" evidence="14"/>
<dbReference type="EMBL" id="AY277723">
    <property type="protein sequence ID" value="ACD65512.1"/>
    <property type="molecule type" value="Genomic_DNA"/>
</dbReference>
<dbReference type="SMR" id="B2RML5"/>
<dbReference type="GlyCosmos" id="B2RML5">
    <property type="glycosylation" value="4 sites, No reported glycans"/>
</dbReference>
<dbReference type="GO" id="GO:0016746">
    <property type="term" value="F:acyltransferase activity"/>
    <property type="evidence" value="ECO:0007669"/>
    <property type="project" value="UniProtKB-KW"/>
</dbReference>
<dbReference type="Gene3D" id="3.30.559.10">
    <property type="entry name" value="Chloramphenicol acetyltransferase-like domain"/>
    <property type="match status" value="2"/>
</dbReference>
<dbReference type="InterPro" id="IPR023213">
    <property type="entry name" value="CAT-like_dom_sf"/>
</dbReference>
<dbReference type="InterPro" id="IPR051283">
    <property type="entry name" value="Sec_Metabolite_Acyltrans"/>
</dbReference>
<dbReference type="PANTHER" id="PTHR31896">
    <property type="entry name" value="FAMILY REGULATORY PROTEIN, PUTATIVE (AFU_ORTHOLOGUE AFUA_3G14730)-RELATED"/>
    <property type="match status" value="1"/>
</dbReference>
<dbReference type="PANTHER" id="PTHR31896:SF69">
    <property type="entry name" value="FAMILY REGULATORY PROTEIN, PUTATIVE (AFU_ORTHOLOGUE AFUA_3G14730)-RELATED"/>
    <property type="match status" value="1"/>
</dbReference>
<dbReference type="Pfam" id="PF02458">
    <property type="entry name" value="Transferase"/>
    <property type="match status" value="1"/>
</dbReference>
<evidence type="ECO:0000250" key="1">
    <source>
        <dbReference type="UniProtKB" id="Q70PR7"/>
    </source>
</evidence>
<evidence type="ECO:0000255" key="2"/>
<evidence type="ECO:0000255" key="3">
    <source>
        <dbReference type="PROSITE-ProRule" id="PRU00498"/>
    </source>
</evidence>
<evidence type="ECO:0000256" key="4">
    <source>
        <dbReference type="SAM" id="MobiDB-lite"/>
    </source>
</evidence>
<evidence type="ECO:0000269" key="5">
    <source>
    </source>
</evidence>
<evidence type="ECO:0000269" key="6">
    <source>
    </source>
</evidence>
<evidence type="ECO:0000269" key="7">
    <source>
    </source>
</evidence>
<evidence type="ECO:0000269" key="8">
    <source>
    </source>
</evidence>
<evidence type="ECO:0000269" key="9">
    <source>
    </source>
</evidence>
<evidence type="ECO:0000269" key="10">
    <source>
    </source>
</evidence>
<evidence type="ECO:0000269" key="11">
    <source>
    </source>
</evidence>
<evidence type="ECO:0000303" key="12">
    <source>
    </source>
</evidence>
<evidence type="ECO:0000305" key="13"/>
<evidence type="ECO:0000305" key="14">
    <source>
    </source>
</evidence>
<evidence type="ECO:0000312" key="15">
    <source>
        <dbReference type="EMBL" id="ACD65512.1"/>
    </source>
</evidence>
<accession>B2RML5</accession>
<organism evidence="15">
    <name type="scientific">Botryotinia fuckeliana</name>
    <name type="common">Noble rot fungus</name>
    <name type="synonym">Botrytis cinerea</name>
    <dbReference type="NCBI Taxonomy" id="40559"/>
    <lineage>
        <taxon>Eukaryota</taxon>
        <taxon>Fungi</taxon>
        <taxon>Dikarya</taxon>
        <taxon>Ascomycota</taxon>
        <taxon>Pezizomycotina</taxon>
        <taxon>Leotiomycetes</taxon>
        <taxon>Helotiales</taxon>
        <taxon>Sclerotiniaceae</taxon>
        <taxon>Botrytis</taxon>
    </lineage>
</organism>
<comment type="function">
    <text evidence="5 6 7 8 9 10 11">Acetyltransferase; part of the gene cluster that mediates the biosynthesis of botrydial (PubMed:14651630, PubMed:19035644, PubMed:27529428). Botrydial is necessary for colonization of plant tissue by the T4 strain (PubMed:19035644). It is a strain-dependent virulence factor since highly aggressive strains like SAS56 or B05 still retain substantial virulence when botrydial synthesis is impaired, since they produce also botcinic acid (PubMed:15986930). The first step of botrydial biosynthesis is performed by the sesquiterpene synthase BOT2 which catalyzes the cyclization of farnesyl diphosphate (FPP) to presilphiperfolan-8-beta-ol (PSP) (PubMed:19035644, PubMed:19476353). The cytochrome P450 monooxygenase BOT4 then catalyzes the hydroxylation at C-4 to give a probotryane intermediate (PubMed:27529428, PubMed:28617493). Acetylation of the hydroxyl at C-4 is carried out by the acetyltransferase BOT5, followed by the combined action of the P450 monooxygenases BOT3 and BOT1, to yield finally the glycol, via the regio- and stereospecific hydroxylations at C-10 and C-15 of the probotryane intermediates, respectively (PubMed:15986930, PubMed:27529428). The cleavage of the C10-C15 bond of probotryane skeleton is an intriguing and chemically important reaction, which could be mediated by some of the monooxygenases or by a combination of them (PubMed:27529428). It is possible that either BOT3 or BOT1 would oxidize either the 10- or the 15-hydroxy group to the hydroperoxide derivative, which would then undergo heterolytic fragmentation to give the dialdehyde botrydial (PubMed:27529428). Finally, the dehydrogenase BOT7 might be involved in the conversion of botrydial to dihydrobotrydial (PubMed:27721016).</text>
</comment>
<comment type="pathway">
    <text evidence="14">Secondary metabolite biosynthesis.</text>
</comment>
<comment type="induction">
    <text evidence="7 10">The botrydial biosynthesis cluster genes are co-regulated by the Ca(2+)/calcineurin signal transduction pathway, which is under the control of the alpha subunit BCG1 of a heterotrimeric G protein (PubMed:19035644). Expression of the cluster is also positively regulated by the cluster-specific transcription factor BOT6 (PubMed:27721016).</text>
</comment>
<comment type="similarity">
    <text evidence="13">Belongs to the plant acyltransferase family.</text>
</comment>
<keyword id="KW-0012">Acyltransferase</keyword>
<keyword id="KW-0325">Glycoprotein</keyword>
<keyword id="KW-0732">Signal</keyword>
<keyword id="KW-0808">Transferase</keyword>
<keyword id="KW-0843">Virulence</keyword>